<sequence length="404" mass="45808">MKIVGAEVFVTCPGRNFVTLKITTDDGLVGLGDATLNGRELSVASYLKDHLCPQLIGRDAHRIEDIWQFFYKGAYWRRGPVTMSAISAVDMALWDIKAKAAGMPLYQLLGGASREGVMVYCHTTGHTIDDVLEDYARHKEMGFKAIRVQCGVPGMKTTYGMSKGKGLAYEPATKGDWPEEQLWSTEKYLDFTPKLFDAVRSKFGYDEHLLHDMHHRLTPIEAARFGKSIEEFRLFWMEDPTPAENQECFRLIRQHTVTPIAVGEVFNSIWDCKQLIEEQLIDYIRTTMTHAGGITGMRRIADFASLYQVRTGSHGPSDLSPICHAAALHFDLWVPNFGVQEYMGYSEQMLEVFPHSWTFDNGYMHPGEKPGLGIEFDEKLAAKYPYDPAYLPVARLEDGTLWNW</sequence>
<reference key="1">
    <citation type="journal article" date="2010" name="PLoS Genet.">
        <title>Genome sequence of the plant growth promoting endophytic bacterium Enterobacter sp. 638.</title>
        <authorList>
            <person name="Taghavi S."/>
            <person name="van der Lelie D."/>
            <person name="Hoffman A."/>
            <person name="Zhang Y.B."/>
            <person name="Walla M.D."/>
            <person name="Vangronsveld J."/>
            <person name="Newman L."/>
            <person name="Monchy S."/>
        </authorList>
    </citation>
    <scope>NUCLEOTIDE SEQUENCE [LARGE SCALE GENOMIC DNA]</scope>
    <source>
        <strain>638</strain>
    </source>
</reference>
<reference key="2">
    <citation type="journal article" date="2014" name="Biochemistry">
        <title>Discovery of function in the enolase superfamily: D-mannonate and D-gluconate dehydratases in the D-mannonate dehydratase subgroup.</title>
        <authorList>
            <person name="Wichelecki D.J."/>
            <person name="Balthazor B.M."/>
            <person name="Chau A.C."/>
            <person name="Vetting M.W."/>
            <person name="Fedorov A.A."/>
            <person name="Fedorov E.V."/>
            <person name="Lukk T."/>
            <person name="Patskovsky Y.V."/>
            <person name="Stead M.B."/>
            <person name="Hillerich B.S."/>
            <person name="Seidel R.D."/>
            <person name="Almo S.C."/>
            <person name="Gerlt J.A."/>
        </authorList>
    </citation>
    <scope>FUNCTION</scope>
    <scope>CATALYTIC ACTIVITY</scope>
    <scope>COFACTOR</scope>
    <scope>BIOPHYSICOCHEMICAL PROPERTIES</scope>
</reference>
<dbReference type="EC" id="4.2.1.-"/>
<dbReference type="EC" id="4.2.1.8"/>
<dbReference type="EMBL" id="CP000653">
    <property type="protein sequence ID" value="ABP60608.1"/>
    <property type="molecule type" value="Genomic_DNA"/>
</dbReference>
<dbReference type="RefSeq" id="WP_012017323.1">
    <property type="nucleotide sequence ID" value="NC_009436.1"/>
</dbReference>
<dbReference type="SMR" id="A4WA78"/>
<dbReference type="STRING" id="399742.Ent638_1932"/>
<dbReference type="KEGG" id="ent:Ent638_1932"/>
<dbReference type="eggNOG" id="COG4948">
    <property type="taxonomic scope" value="Bacteria"/>
</dbReference>
<dbReference type="HOGENOM" id="CLU_030273_6_1_6"/>
<dbReference type="OrthoDB" id="103536at2"/>
<dbReference type="Proteomes" id="UP000000230">
    <property type="component" value="Chromosome"/>
</dbReference>
<dbReference type="GO" id="GO:0000287">
    <property type="term" value="F:magnesium ion binding"/>
    <property type="evidence" value="ECO:0000314"/>
    <property type="project" value="UniProtKB"/>
</dbReference>
<dbReference type="GO" id="GO:0008927">
    <property type="term" value="F:mannonate dehydratase activity"/>
    <property type="evidence" value="ECO:0000314"/>
    <property type="project" value="UniProtKB"/>
</dbReference>
<dbReference type="GO" id="GO:0009063">
    <property type="term" value="P:amino acid catabolic process"/>
    <property type="evidence" value="ECO:0007669"/>
    <property type="project" value="InterPro"/>
</dbReference>
<dbReference type="GO" id="GO:0016052">
    <property type="term" value="P:carbohydrate catabolic process"/>
    <property type="evidence" value="ECO:0000314"/>
    <property type="project" value="UniProtKB"/>
</dbReference>
<dbReference type="CDD" id="cd03322">
    <property type="entry name" value="RspA"/>
    <property type="match status" value="1"/>
</dbReference>
<dbReference type="FunFam" id="3.20.20.120:FF:000004">
    <property type="entry name" value="D-galactonate dehydratase family protein"/>
    <property type="match status" value="1"/>
</dbReference>
<dbReference type="FunFam" id="3.30.390.10:FF:000002">
    <property type="entry name" value="D-galactonate dehydratase family protein"/>
    <property type="match status" value="1"/>
</dbReference>
<dbReference type="Gene3D" id="3.20.20.120">
    <property type="entry name" value="Enolase-like C-terminal domain"/>
    <property type="match status" value="1"/>
</dbReference>
<dbReference type="Gene3D" id="3.30.390.10">
    <property type="entry name" value="Enolase-like, N-terminal domain"/>
    <property type="match status" value="1"/>
</dbReference>
<dbReference type="InterPro" id="IPR034589">
    <property type="entry name" value="D-mannonate_dehydratase-like"/>
</dbReference>
<dbReference type="InterPro" id="IPR053379">
    <property type="entry name" value="D-mannonate_dehydratase_GalD"/>
</dbReference>
<dbReference type="InterPro" id="IPR034593">
    <property type="entry name" value="DgoD-like"/>
</dbReference>
<dbReference type="InterPro" id="IPR036849">
    <property type="entry name" value="Enolase-like_C_sf"/>
</dbReference>
<dbReference type="InterPro" id="IPR029017">
    <property type="entry name" value="Enolase-like_N"/>
</dbReference>
<dbReference type="InterPro" id="IPR029065">
    <property type="entry name" value="Enolase_C-like"/>
</dbReference>
<dbReference type="InterPro" id="IPR018110">
    <property type="entry name" value="Mandel_Rmase/mucon_lact_enz_CS"/>
</dbReference>
<dbReference type="InterPro" id="IPR013342">
    <property type="entry name" value="Mandelate_racemase_C"/>
</dbReference>
<dbReference type="InterPro" id="IPR013341">
    <property type="entry name" value="Mandelate_racemase_N_dom"/>
</dbReference>
<dbReference type="NCBIfam" id="NF043051">
    <property type="entry name" value="ManoateDhtManD"/>
    <property type="match status" value="1"/>
</dbReference>
<dbReference type="NCBIfam" id="NF011654">
    <property type="entry name" value="PRK15072.1"/>
    <property type="match status" value="1"/>
</dbReference>
<dbReference type="PANTHER" id="PTHR48080">
    <property type="entry name" value="D-GALACTONATE DEHYDRATASE-RELATED"/>
    <property type="match status" value="1"/>
</dbReference>
<dbReference type="PANTHER" id="PTHR48080:SF6">
    <property type="entry name" value="STARVATION-SENSING PROTEIN RSPA"/>
    <property type="match status" value="1"/>
</dbReference>
<dbReference type="Pfam" id="PF13378">
    <property type="entry name" value="MR_MLE_C"/>
    <property type="match status" value="1"/>
</dbReference>
<dbReference type="Pfam" id="PF02746">
    <property type="entry name" value="MR_MLE_N"/>
    <property type="match status" value="1"/>
</dbReference>
<dbReference type="SFLD" id="SFLDS00001">
    <property type="entry name" value="Enolase"/>
    <property type="match status" value="1"/>
</dbReference>
<dbReference type="SFLD" id="SFLDG00033">
    <property type="entry name" value="mannonate_dehydratase"/>
    <property type="match status" value="1"/>
</dbReference>
<dbReference type="SMART" id="SM00922">
    <property type="entry name" value="MR_MLE"/>
    <property type="match status" value="1"/>
</dbReference>
<dbReference type="SUPFAM" id="SSF51604">
    <property type="entry name" value="Enolase C-terminal domain-like"/>
    <property type="match status" value="1"/>
</dbReference>
<dbReference type="SUPFAM" id="SSF54826">
    <property type="entry name" value="Enolase N-terminal domain-like"/>
    <property type="match status" value="1"/>
</dbReference>
<dbReference type="PROSITE" id="PS00908">
    <property type="entry name" value="MR_MLE_1"/>
    <property type="match status" value="1"/>
</dbReference>
<dbReference type="PROSITE" id="PS00909">
    <property type="entry name" value="MR_MLE_2"/>
    <property type="match status" value="1"/>
</dbReference>
<gene>
    <name type="ordered locus">Ent638_1932</name>
</gene>
<name>MAND_ENT38</name>
<proteinExistence type="evidence at protein level"/>
<accession>A4WA78</accession>
<evidence type="ECO:0000250" key="1"/>
<evidence type="ECO:0000269" key="2">
    <source>
    </source>
</evidence>
<evidence type="ECO:0000305" key="3"/>
<keyword id="KW-0456">Lyase</keyword>
<keyword id="KW-0460">Magnesium</keyword>
<keyword id="KW-0479">Metal-binding</keyword>
<organism>
    <name type="scientific">Enterobacter sp. (strain 638)</name>
    <dbReference type="NCBI Taxonomy" id="399742"/>
    <lineage>
        <taxon>Bacteria</taxon>
        <taxon>Pseudomonadati</taxon>
        <taxon>Pseudomonadota</taxon>
        <taxon>Gammaproteobacteria</taxon>
        <taxon>Enterobacterales</taxon>
        <taxon>Enterobacteriaceae</taxon>
        <taxon>Enterobacter</taxon>
    </lineage>
</organism>
<protein>
    <recommendedName>
        <fullName>D-galactonate dehydratase family member Ent638_1932</fullName>
        <ecNumber>4.2.1.-</ecNumber>
    </recommendedName>
    <alternativeName>
        <fullName>D-mannonate dehydratase</fullName>
        <ecNumber>4.2.1.8</ecNumber>
    </alternativeName>
</protein>
<comment type="function">
    <text evidence="2">Has low D-mannonate dehydratase activity (in vitro), suggesting that this is not a physiological substrate and that it has no significant role in D-mannonate degradation in vivo. Has no detectable activity with a panel of 70 other acid sugars (in vitro).</text>
</comment>
<comment type="catalytic activity">
    <reaction evidence="2">
        <text>D-mannonate = 2-dehydro-3-deoxy-D-gluconate + H2O</text>
        <dbReference type="Rhea" id="RHEA:20097"/>
        <dbReference type="ChEBI" id="CHEBI:15377"/>
        <dbReference type="ChEBI" id="CHEBI:17767"/>
        <dbReference type="ChEBI" id="CHEBI:57990"/>
        <dbReference type="EC" id="4.2.1.8"/>
    </reaction>
</comment>
<comment type="cofactor">
    <cofactor evidence="2">
        <name>Mg(2+)</name>
        <dbReference type="ChEBI" id="CHEBI:18420"/>
    </cofactor>
    <text evidence="2">Binds 1 Mg(2+) ion per subunit.</text>
</comment>
<comment type="biophysicochemical properties">
    <kinetics>
        <text evidence="2">kcat is 0.02 sec(-1) with D-mannonate.</text>
    </kinetics>
</comment>
<comment type="similarity">
    <text evidence="3">Belongs to the mandelate racemase/muconate lactonizing enzyme family. GalD subfamily.</text>
</comment>
<feature type="chain" id="PRO_0000429886" description="D-galactonate dehydratase family member Ent638_1932">
    <location>
        <begin position="1"/>
        <end position="404"/>
    </location>
</feature>
<feature type="active site" description="Proton donor/acceptor" evidence="1">
    <location>
        <position position="159"/>
    </location>
</feature>
<feature type="active site" description="Proton donor/acceptor" evidence="1">
    <location>
        <position position="214"/>
    </location>
</feature>
<feature type="binding site" evidence="1">
    <location>
        <position position="37"/>
    </location>
    <ligand>
        <name>substrate</name>
    </ligand>
</feature>
<feature type="binding site" evidence="1">
    <location>
        <position position="122"/>
    </location>
    <ligand>
        <name>substrate</name>
    </ligand>
</feature>
<feature type="binding site" evidence="1">
    <location>
        <position position="212"/>
    </location>
    <ligand>
        <name>Mg(2+)</name>
        <dbReference type="ChEBI" id="CHEBI:18420"/>
    </ligand>
</feature>
<feature type="binding site" evidence="1">
    <location>
        <position position="238"/>
    </location>
    <ligand>
        <name>Mg(2+)</name>
        <dbReference type="ChEBI" id="CHEBI:18420"/>
    </ligand>
</feature>
<feature type="binding site" evidence="1">
    <location>
        <position position="264"/>
    </location>
    <ligand>
        <name>Mg(2+)</name>
        <dbReference type="ChEBI" id="CHEBI:18420"/>
    </ligand>
</feature>
<feature type="binding site" evidence="1">
    <location>
        <position position="264"/>
    </location>
    <ligand>
        <name>substrate</name>
    </ligand>
</feature>
<feature type="binding site" evidence="1">
    <location>
        <position position="285"/>
    </location>
    <ligand>
        <name>substrate</name>
    </ligand>
</feature>
<feature type="binding site" evidence="1">
    <location>
        <position position="314"/>
    </location>
    <ligand>
        <name>substrate</name>
    </ligand>
</feature>
<feature type="binding site" evidence="1">
    <location>
        <position position="318"/>
    </location>
    <ligand>
        <name>substrate</name>
    </ligand>
</feature>
<feature type="binding site" evidence="1">
    <location>
        <position position="341"/>
    </location>
    <ligand>
        <name>substrate</name>
    </ligand>
</feature>
<feature type="site" description="Important for activity and substrate specificity; Pro is observed in family members with low D-mannonate dehydratase activity" evidence="1">
    <location>
        <position position="316"/>
    </location>
</feature>